<name>O5P70_MOUSE</name>
<proteinExistence type="inferred from homology"/>
<organism>
    <name type="scientific">Mus musculus</name>
    <name type="common">Mouse</name>
    <dbReference type="NCBI Taxonomy" id="10090"/>
    <lineage>
        <taxon>Eukaryota</taxon>
        <taxon>Metazoa</taxon>
        <taxon>Chordata</taxon>
        <taxon>Craniata</taxon>
        <taxon>Vertebrata</taxon>
        <taxon>Euteleostomi</taxon>
        <taxon>Mammalia</taxon>
        <taxon>Eutheria</taxon>
        <taxon>Euarchontoglires</taxon>
        <taxon>Glires</taxon>
        <taxon>Rodentia</taxon>
        <taxon>Myomorpha</taxon>
        <taxon>Muroidea</taxon>
        <taxon>Muridae</taxon>
        <taxon>Murinae</taxon>
        <taxon>Mus</taxon>
        <taxon>Mus</taxon>
    </lineage>
</organism>
<comment type="function">
    <text>Potential odorant receptor.</text>
</comment>
<comment type="subcellular location">
    <subcellularLocation>
        <location evidence="3">Cell membrane</location>
        <topology evidence="1">Multi-pass membrane protein</topology>
    </subcellularLocation>
</comment>
<comment type="similarity">
    <text evidence="2">Belongs to the G-protein coupled receptor 1 family.</text>
</comment>
<gene>
    <name evidence="4" type="primary">Or5p70</name>
    <name evidence="4" type="synonym">Mor204-37</name>
    <name evidence="4" type="synonym">Olfr495</name>
</gene>
<sequence length="330" mass="36873">MAFLEDGNHTIVTEFILLGLTDDPVLRDILFTIILCIYLVTVSGNLSTILLIRVSSQLHHPMYFFLSHLASVDIGISSSVTPNMLANFLVKPNTISYIGCSIQFTSAVFLATVECFLLAAMAYDRFVAICNPLLYSTKMSREACIQLVVGSYIQGLLNASFFTLSFFSLIFCGPNRINHFYCDLAPLVELSCSDVTLAVVITSISAGFITLTTVFVIAISYSCIFITIMKMHSTESRYKAFSTCTSHLTAVTLFYGTTMFIYVMPKSSYSTDQNKVLSVFYMVVIPMLNPLIYSLRNNEIKGALKRYLGKKIFSYGNLFCKTHYNDTHQV</sequence>
<dbReference type="EMBL" id="AY073729">
    <property type="protein sequence ID" value="AAL61392.1"/>
    <property type="molecule type" value="Genomic_DNA"/>
</dbReference>
<dbReference type="EMBL" id="AY317603">
    <property type="protein sequence ID" value="AAP70998.1"/>
    <property type="molecule type" value="Genomic_DNA"/>
</dbReference>
<dbReference type="CCDS" id="CCDS21714.1"/>
<dbReference type="RefSeq" id="NP_666476.1">
    <property type="nucleotide sequence ID" value="NM_146364.1"/>
</dbReference>
<dbReference type="SMR" id="Q8VF12"/>
<dbReference type="FunCoup" id="Q8VF12">
    <property type="interactions" value="1129"/>
</dbReference>
<dbReference type="STRING" id="10090.ENSMUSP00000150689"/>
<dbReference type="GlyCosmos" id="Q8VF12">
    <property type="glycosylation" value="1 site, No reported glycans"/>
</dbReference>
<dbReference type="GlyGen" id="Q8VF12">
    <property type="glycosylation" value="1 site"/>
</dbReference>
<dbReference type="PaxDb" id="10090-ENSMUSP00000071440"/>
<dbReference type="DNASU" id="258361"/>
<dbReference type="Ensembl" id="ENSMUST00000210990.2">
    <property type="protein sequence ID" value="ENSMUSP00000147501.2"/>
    <property type="gene ID" value="ENSMUSG00000110253.3"/>
</dbReference>
<dbReference type="Ensembl" id="ENSMUST00000215215.2">
    <property type="protein sequence ID" value="ENSMUSP00000150689.2"/>
    <property type="gene ID" value="ENSMUSG00000110253.3"/>
</dbReference>
<dbReference type="GeneID" id="258361"/>
<dbReference type="KEGG" id="mmu:258361"/>
<dbReference type="UCSC" id="uc009jcj.1">
    <property type="organism name" value="mouse"/>
</dbReference>
<dbReference type="AGR" id="MGI:3030329"/>
<dbReference type="CTD" id="258361"/>
<dbReference type="MGI" id="MGI:3030329">
    <property type="gene designation" value="Or5p70"/>
</dbReference>
<dbReference type="VEuPathDB" id="HostDB:ENSMUSG00000110253"/>
<dbReference type="eggNOG" id="ENOG502SKA1">
    <property type="taxonomic scope" value="Eukaryota"/>
</dbReference>
<dbReference type="GeneTree" id="ENSGT01130000278279"/>
<dbReference type="HOGENOM" id="CLU_012526_1_0_1"/>
<dbReference type="InParanoid" id="Q8VF12"/>
<dbReference type="OMA" id="CSIQFVS"/>
<dbReference type="OrthoDB" id="9596089at2759"/>
<dbReference type="PhylomeDB" id="Q8VF12"/>
<dbReference type="TreeFam" id="TF338848"/>
<dbReference type="BioGRID-ORCS" id="258361">
    <property type="hits" value="0 hits in 39 CRISPR screens"/>
</dbReference>
<dbReference type="ChiTaRS" id="Olfr495">
    <property type="organism name" value="mouse"/>
</dbReference>
<dbReference type="PRO" id="PR:Q8VF12"/>
<dbReference type="Proteomes" id="UP000000589">
    <property type="component" value="Chromosome 7"/>
</dbReference>
<dbReference type="RNAct" id="Q8VF12">
    <property type="molecule type" value="protein"/>
</dbReference>
<dbReference type="GO" id="GO:0016020">
    <property type="term" value="C:membrane"/>
    <property type="evidence" value="ECO:0000247"/>
    <property type="project" value="MGI"/>
</dbReference>
<dbReference type="GO" id="GO:0005886">
    <property type="term" value="C:plasma membrane"/>
    <property type="evidence" value="ECO:0007669"/>
    <property type="project" value="UniProtKB-SubCell"/>
</dbReference>
<dbReference type="GO" id="GO:0004930">
    <property type="term" value="F:G protein-coupled receptor activity"/>
    <property type="evidence" value="ECO:0007669"/>
    <property type="project" value="UniProtKB-KW"/>
</dbReference>
<dbReference type="GO" id="GO:0004984">
    <property type="term" value="F:olfactory receptor activity"/>
    <property type="evidence" value="ECO:0000247"/>
    <property type="project" value="MGI"/>
</dbReference>
<dbReference type="GO" id="GO:0007186">
    <property type="term" value="P:G protein-coupled receptor signaling pathway"/>
    <property type="evidence" value="ECO:0000247"/>
    <property type="project" value="MGI"/>
</dbReference>
<dbReference type="GO" id="GO:0007608">
    <property type="term" value="P:sensory perception of smell"/>
    <property type="evidence" value="ECO:0000247"/>
    <property type="project" value="MGI"/>
</dbReference>
<dbReference type="CDD" id="cd15416">
    <property type="entry name" value="7tmA_OR5P-like"/>
    <property type="match status" value="1"/>
</dbReference>
<dbReference type="FunFam" id="1.20.1070.10:FF:000004">
    <property type="entry name" value="Olfactory receptor"/>
    <property type="match status" value="1"/>
</dbReference>
<dbReference type="Gene3D" id="1.20.1070.10">
    <property type="entry name" value="Rhodopsin 7-helix transmembrane proteins"/>
    <property type="match status" value="1"/>
</dbReference>
<dbReference type="InterPro" id="IPR000276">
    <property type="entry name" value="GPCR_Rhodpsn"/>
</dbReference>
<dbReference type="InterPro" id="IPR017452">
    <property type="entry name" value="GPCR_Rhodpsn_7TM"/>
</dbReference>
<dbReference type="InterPro" id="IPR000725">
    <property type="entry name" value="Olfact_rcpt"/>
</dbReference>
<dbReference type="PANTHER" id="PTHR48018">
    <property type="entry name" value="OLFACTORY RECEPTOR"/>
    <property type="match status" value="1"/>
</dbReference>
<dbReference type="Pfam" id="PF13853">
    <property type="entry name" value="7tm_4"/>
    <property type="match status" value="1"/>
</dbReference>
<dbReference type="PRINTS" id="PR00237">
    <property type="entry name" value="GPCRRHODOPSN"/>
</dbReference>
<dbReference type="PRINTS" id="PR00245">
    <property type="entry name" value="OLFACTORYR"/>
</dbReference>
<dbReference type="SUPFAM" id="SSF81321">
    <property type="entry name" value="Family A G protein-coupled receptor-like"/>
    <property type="match status" value="1"/>
</dbReference>
<dbReference type="PROSITE" id="PS00237">
    <property type="entry name" value="G_PROTEIN_RECEP_F1_1"/>
    <property type="match status" value="1"/>
</dbReference>
<dbReference type="PROSITE" id="PS50262">
    <property type="entry name" value="G_PROTEIN_RECEP_F1_2"/>
    <property type="match status" value="1"/>
</dbReference>
<reference key="1">
    <citation type="journal article" date="2002" name="Nat. Neurosci.">
        <title>The olfactory receptor gene superfamily of the mouse.</title>
        <authorList>
            <person name="Zhang X."/>
            <person name="Firestein S."/>
        </authorList>
    </citation>
    <scope>NUCLEOTIDE SEQUENCE [GENOMIC DNA]</scope>
</reference>
<reference key="2">
    <citation type="journal article" date="2002" name="Hum. Mol. Genet.">
        <title>Different evolutionary processes shaped the mouse and human olfactory receptor gene families.</title>
        <authorList>
            <person name="Young J.M."/>
            <person name="Friedman C."/>
            <person name="Williams E.M."/>
            <person name="Ross J.A."/>
            <person name="Tonnes-Priddy L."/>
            <person name="Trask B.J."/>
        </authorList>
    </citation>
    <scope>NUCLEOTIDE SEQUENCE [GENOMIC DNA]</scope>
</reference>
<reference key="3">
    <citation type="journal article" date="2002" name="Hum. Mol. Genet.">
        <authorList>
            <person name="Young J.M."/>
            <person name="Friedman C."/>
            <person name="Williams E.M."/>
            <person name="Ross J.A."/>
            <person name="Tonnes-Priddy L."/>
            <person name="Trask B.J."/>
        </authorList>
    </citation>
    <scope>ERRATUM OF PUBMED:11875048</scope>
</reference>
<feature type="chain" id="PRO_0000150850" description="Olfactory receptor 5P70">
    <location>
        <begin position="1"/>
        <end position="330"/>
    </location>
</feature>
<feature type="topological domain" description="Extracellular" evidence="1">
    <location>
        <begin position="1"/>
        <end position="28"/>
    </location>
</feature>
<feature type="transmembrane region" description="Helical; Name=1" evidence="1">
    <location>
        <begin position="29"/>
        <end position="49"/>
    </location>
</feature>
<feature type="topological domain" description="Cytoplasmic" evidence="1">
    <location>
        <begin position="50"/>
        <end position="57"/>
    </location>
</feature>
<feature type="transmembrane region" description="Helical; Name=2" evidence="1">
    <location>
        <begin position="58"/>
        <end position="78"/>
    </location>
</feature>
<feature type="topological domain" description="Extracellular" evidence="1">
    <location>
        <begin position="79"/>
        <end position="102"/>
    </location>
</feature>
<feature type="transmembrane region" description="Helical; Name=3" evidence="1">
    <location>
        <begin position="103"/>
        <end position="123"/>
    </location>
</feature>
<feature type="topological domain" description="Cytoplasmic" evidence="1">
    <location>
        <begin position="124"/>
        <end position="136"/>
    </location>
</feature>
<feature type="transmembrane region" description="Helical; Name=4" evidence="1">
    <location>
        <begin position="137"/>
        <end position="157"/>
    </location>
</feature>
<feature type="topological domain" description="Extracellular" evidence="1">
    <location>
        <begin position="158"/>
        <end position="199"/>
    </location>
</feature>
<feature type="transmembrane region" description="Helical; Name=5" evidence="1">
    <location>
        <begin position="200"/>
        <end position="220"/>
    </location>
</feature>
<feature type="topological domain" description="Cytoplasmic" evidence="1">
    <location>
        <begin position="221"/>
        <end position="240"/>
    </location>
</feature>
<feature type="transmembrane region" description="Helical; Name=6" evidence="1">
    <location>
        <begin position="241"/>
        <end position="261"/>
    </location>
</feature>
<feature type="topological domain" description="Extracellular" evidence="1">
    <location>
        <begin position="262"/>
        <end position="274"/>
    </location>
</feature>
<feature type="transmembrane region" description="Helical; Name=7" evidence="1">
    <location>
        <begin position="275"/>
        <end position="295"/>
    </location>
</feature>
<feature type="topological domain" description="Cytoplasmic" evidence="1">
    <location>
        <begin position="296"/>
        <end position="330"/>
    </location>
</feature>
<feature type="glycosylation site" description="N-linked (GlcNAc...) asparagine" evidence="1">
    <location>
        <position position="8"/>
    </location>
</feature>
<feature type="disulfide bond" evidence="2">
    <location>
        <begin position="100"/>
        <end position="192"/>
    </location>
</feature>
<keyword id="KW-1003">Cell membrane</keyword>
<keyword id="KW-1015">Disulfide bond</keyword>
<keyword id="KW-0297">G-protein coupled receptor</keyword>
<keyword id="KW-0325">Glycoprotein</keyword>
<keyword id="KW-0472">Membrane</keyword>
<keyword id="KW-0552">Olfaction</keyword>
<keyword id="KW-0675">Receptor</keyword>
<keyword id="KW-1185">Reference proteome</keyword>
<keyword id="KW-0716">Sensory transduction</keyword>
<keyword id="KW-0807">Transducer</keyword>
<keyword id="KW-0812">Transmembrane</keyword>
<keyword id="KW-1133">Transmembrane helix</keyword>
<protein>
    <recommendedName>
        <fullName evidence="3">Olfactory receptor 5P70</fullName>
    </recommendedName>
    <alternativeName>
        <fullName>Olfactory receptor 204-37</fullName>
    </alternativeName>
    <alternativeName>
        <fullName>Olfactory receptor 495</fullName>
    </alternativeName>
</protein>
<accession>Q8VF12</accession>
<evidence type="ECO:0000255" key="1"/>
<evidence type="ECO:0000255" key="2">
    <source>
        <dbReference type="PROSITE-ProRule" id="PRU00521"/>
    </source>
</evidence>
<evidence type="ECO:0000305" key="3"/>
<evidence type="ECO:0000312" key="4">
    <source>
        <dbReference type="MGI" id="MGI:3030329"/>
    </source>
</evidence>